<keyword id="KW-0413">Isomerase</keyword>
<keyword id="KW-1185">Reference proteome</keyword>
<accession>P0A8G4</accession>
<accession>P42605</accession>
<accession>P42606</accession>
<accession>P42607</accession>
<accession>P76662</accession>
<accession>P76663</accession>
<accession>P76664</accession>
<gene>
    <name type="primary">uxaC</name>
    <name type="ordered locus">c3850</name>
</gene>
<comment type="catalytic activity">
    <reaction>
        <text>D-glucuronate = D-fructuronate</text>
        <dbReference type="Rhea" id="RHEA:13049"/>
        <dbReference type="ChEBI" id="CHEBI:58720"/>
        <dbReference type="ChEBI" id="CHEBI:59863"/>
        <dbReference type="EC" id="5.3.1.12"/>
    </reaction>
</comment>
<comment type="catalytic activity">
    <reaction>
        <text>aldehydo-D-galacturonate = keto-D-tagaturonate</text>
        <dbReference type="Rhea" id="RHEA:27702"/>
        <dbReference type="ChEBI" id="CHEBI:12952"/>
        <dbReference type="ChEBI" id="CHEBI:17886"/>
        <dbReference type="EC" id="5.3.1.12"/>
    </reaction>
</comment>
<comment type="pathway">
    <text>Carbohydrate metabolism; pentose and glucuronate interconversion.</text>
</comment>
<comment type="similarity">
    <text evidence="1">Belongs to the metallo-dependent hydrolases superfamily. Uronate isomerase family.</text>
</comment>
<comment type="sequence caution" evidence="1">
    <conflict type="erroneous initiation">
        <sequence resource="EMBL-CDS" id="AAN82295"/>
    </conflict>
</comment>
<proteinExistence type="inferred from homology"/>
<name>UXAC_ECOL6</name>
<reference key="1">
    <citation type="journal article" date="2002" name="Proc. Natl. Acad. Sci. U.S.A.">
        <title>Extensive mosaic structure revealed by the complete genome sequence of uropathogenic Escherichia coli.</title>
        <authorList>
            <person name="Welch R.A."/>
            <person name="Burland V."/>
            <person name="Plunkett G. III"/>
            <person name="Redford P."/>
            <person name="Roesch P."/>
            <person name="Rasko D."/>
            <person name="Buckles E.L."/>
            <person name="Liou S.-R."/>
            <person name="Boutin A."/>
            <person name="Hackett J."/>
            <person name="Stroud D."/>
            <person name="Mayhew G.F."/>
            <person name="Rose D.J."/>
            <person name="Zhou S."/>
            <person name="Schwartz D.C."/>
            <person name="Perna N.T."/>
            <person name="Mobley H.L.T."/>
            <person name="Donnenberg M.S."/>
            <person name="Blattner F.R."/>
        </authorList>
    </citation>
    <scope>NUCLEOTIDE SEQUENCE [LARGE SCALE GENOMIC DNA]</scope>
    <source>
        <strain>CFT073 / ATCC 700928 / UPEC</strain>
    </source>
</reference>
<feature type="chain" id="PRO_0000172773" description="Uronate isomerase">
    <location>
        <begin position="1"/>
        <end position="470"/>
    </location>
</feature>
<dbReference type="EC" id="5.3.1.12"/>
<dbReference type="EMBL" id="AE014075">
    <property type="protein sequence ID" value="AAN82295.1"/>
    <property type="status" value="ALT_INIT"/>
    <property type="molecule type" value="Genomic_DNA"/>
</dbReference>
<dbReference type="RefSeq" id="WP_000187442.1">
    <property type="nucleotide sequence ID" value="NZ_CP051263.1"/>
</dbReference>
<dbReference type="SMR" id="P0A8G4"/>
<dbReference type="STRING" id="199310.c3850"/>
<dbReference type="GeneID" id="93778895"/>
<dbReference type="KEGG" id="ecc:c3850"/>
<dbReference type="eggNOG" id="COG1904">
    <property type="taxonomic scope" value="Bacteria"/>
</dbReference>
<dbReference type="HOGENOM" id="CLU_044465_1_0_6"/>
<dbReference type="UniPathway" id="UPA00246"/>
<dbReference type="Proteomes" id="UP000001410">
    <property type="component" value="Chromosome"/>
</dbReference>
<dbReference type="GO" id="GO:0008880">
    <property type="term" value="F:glucuronate isomerase activity"/>
    <property type="evidence" value="ECO:0007669"/>
    <property type="project" value="UniProtKB-UniRule"/>
</dbReference>
<dbReference type="GO" id="GO:0019698">
    <property type="term" value="P:D-galacturonate catabolic process"/>
    <property type="evidence" value="ECO:0007669"/>
    <property type="project" value="TreeGrafter"/>
</dbReference>
<dbReference type="GO" id="GO:0042840">
    <property type="term" value="P:D-glucuronate catabolic process"/>
    <property type="evidence" value="ECO:0007669"/>
    <property type="project" value="TreeGrafter"/>
</dbReference>
<dbReference type="FunFam" id="1.10.2020.10:FF:000001">
    <property type="entry name" value="Uronate isomerase"/>
    <property type="match status" value="1"/>
</dbReference>
<dbReference type="Gene3D" id="3.20.20.140">
    <property type="entry name" value="Metal-dependent hydrolases"/>
    <property type="match status" value="1"/>
</dbReference>
<dbReference type="Gene3D" id="1.10.2020.10">
    <property type="entry name" value="uronate isomerase, domain 2, chain A"/>
    <property type="match status" value="1"/>
</dbReference>
<dbReference type="HAMAP" id="MF_00675">
    <property type="entry name" value="UxaC"/>
    <property type="match status" value="1"/>
</dbReference>
<dbReference type="InterPro" id="IPR032466">
    <property type="entry name" value="Metal_Hydrolase"/>
</dbReference>
<dbReference type="InterPro" id="IPR003766">
    <property type="entry name" value="Uronate_isomerase"/>
</dbReference>
<dbReference type="NCBIfam" id="NF002794">
    <property type="entry name" value="PRK02925.1"/>
    <property type="match status" value="1"/>
</dbReference>
<dbReference type="PANTHER" id="PTHR30068">
    <property type="entry name" value="URONATE ISOMERASE"/>
    <property type="match status" value="1"/>
</dbReference>
<dbReference type="PANTHER" id="PTHR30068:SF4">
    <property type="entry name" value="URONATE ISOMERASE"/>
    <property type="match status" value="1"/>
</dbReference>
<dbReference type="Pfam" id="PF02614">
    <property type="entry name" value="UxaC"/>
    <property type="match status" value="1"/>
</dbReference>
<dbReference type="SUPFAM" id="SSF51556">
    <property type="entry name" value="Metallo-dependent hydrolases"/>
    <property type="match status" value="1"/>
</dbReference>
<evidence type="ECO:0000305" key="1"/>
<protein>
    <recommendedName>
        <fullName>Uronate isomerase</fullName>
        <ecNumber>5.3.1.12</ecNumber>
    </recommendedName>
    <alternativeName>
        <fullName>Glucuronate isomerase</fullName>
    </alternativeName>
    <alternativeName>
        <fullName>Uronic isomerase</fullName>
    </alternativeName>
</protein>
<organism>
    <name type="scientific">Escherichia coli O6:H1 (strain CFT073 / ATCC 700928 / UPEC)</name>
    <dbReference type="NCBI Taxonomy" id="199310"/>
    <lineage>
        <taxon>Bacteria</taxon>
        <taxon>Pseudomonadati</taxon>
        <taxon>Pseudomonadota</taxon>
        <taxon>Gammaproteobacteria</taxon>
        <taxon>Enterobacterales</taxon>
        <taxon>Enterobacteriaceae</taxon>
        <taxon>Escherichia</taxon>
    </lineage>
</organism>
<sequence>MTPFMTEDFLLDTEFARRLYHDYAKDQPIFDYHCHLPPQQIAEDYRFKNLYDIWLKGDHYKWRAMRTNGVAERLCTGDASDREKFDAWAATVPHTIGNPLYHWTHLELRRPFGITGKLLSPSTADEIWNECNELLAQDNFSARGIMQQMNVKMVGTTDDPIDSLEHHAEIAKDGSFTIKVLPSWRPDKAFNIEQATFNDYMAKLGEVSDTDIRRFADLQTALTKRLDHFAAHGCKVSDHALDVVMFAEANEAELDSILARRLAGETLSEHEVAQFKTAVLVFLGAEYARRGWVQQYHIGALRNNNLRQFKLLGPDVGFDSINDRPMAEELSKLLSKQNEENLLPKTILYCLNPRDNEVLGTMIGNFQGEGMPGKMQFGSGWWFNDQKDGMERQMTQLAQLGLLSRFVGMLTDSRSFLSYTRHEYFRRILCQMIGRWVEAGEAPADINLLGEMVKNICFNNARDYFAIELN</sequence>